<keyword id="KW-0067">ATP-binding</keyword>
<keyword id="KW-0963">Cytoplasm</keyword>
<keyword id="KW-0418">Kinase</keyword>
<keyword id="KW-0547">Nucleotide-binding</keyword>
<keyword id="KW-1185">Reference proteome</keyword>
<keyword id="KW-0808">Transferase</keyword>
<protein>
    <recommendedName>
        <fullName evidence="1">Guanylate kinase</fullName>
        <ecNumber evidence="1">2.7.4.8</ecNumber>
    </recommendedName>
    <alternativeName>
        <fullName evidence="1">GMP kinase</fullName>
    </alternativeName>
</protein>
<reference key="1">
    <citation type="journal article" date="2002" name="Proc. Natl. Acad. Sci. U.S.A.">
        <title>Genome sequence of Streptococcus mutans UA159, a cariogenic dental pathogen.</title>
        <authorList>
            <person name="Ajdic D.J."/>
            <person name="McShan W.M."/>
            <person name="McLaughlin R.E."/>
            <person name="Savic G."/>
            <person name="Chang J."/>
            <person name="Carson M.B."/>
            <person name="Primeaux C."/>
            <person name="Tian R."/>
            <person name="Kenton S."/>
            <person name="Jia H.G."/>
            <person name="Lin S.P."/>
            <person name="Qian Y."/>
            <person name="Li S."/>
            <person name="Zhu H."/>
            <person name="Najar F.Z."/>
            <person name="Lai H."/>
            <person name="White J."/>
            <person name="Roe B.A."/>
            <person name="Ferretti J.J."/>
        </authorList>
    </citation>
    <scope>NUCLEOTIDE SEQUENCE [LARGE SCALE GENOMIC DNA]</scope>
    <source>
        <strain>ATCC 700610 / UA159</strain>
    </source>
</reference>
<organism>
    <name type="scientific">Streptococcus mutans serotype c (strain ATCC 700610 / UA159)</name>
    <dbReference type="NCBI Taxonomy" id="210007"/>
    <lineage>
        <taxon>Bacteria</taxon>
        <taxon>Bacillati</taxon>
        <taxon>Bacillota</taxon>
        <taxon>Bacilli</taxon>
        <taxon>Lactobacillales</taxon>
        <taxon>Streptococcaceae</taxon>
        <taxon>Streptococcus</taxon>
    </lineage>
</organism>
<comment type="function">
    <text evidence="1">Essential for recycling GMP and indirectly, cGMP.</text>
</comment>
<comment type="catalytic activity">
    <reaction evidence="1">
        <text>GMP + ATP = GDP + ADP</text>
        <dbReference type="Rhea" id="RHEA:20780"/>
        <dbReference type="ChEBI" id="CHEBI:30616"/>
        <dbReference type="ChEBI" id="CHEBI:58115"/>
        <dbReference type="ChEBI" id="CHEBI:58189"/>
        <dbReference type="ChEBI" id="CHEBI:456216"/>
        <dbReference type="EC" id="2.7.4.8"/>
    </reaction>
</comment>
<comment type="subcellular location">
    <subcellularLocation>
        <location evidence="1">Cytoplasm</location>
    </subcellularLocation>
</comment>
<comment type="similarity">
    <text evidence="1">Belongs to the guanylate kinase family.</text>
</comment>
<evidence type="ECO:0000255" key="1">
    <source>
        <dbReference type="HAMAP-Rule" id="MF_00328"/>
    </source>
</evidence>
<gene>
    <name evidence="1" type="primary">gmk</name>
    <name type="ordered locus">SMU_478</name>
</gene>
<feature type="chain" id="PRO_0000170617" description="Guanylate kinase">
    <location>
        <begin position="1"/>
        <end position="210"/>
    </location>
</feature>
<feature type="domain" description="Guanylate kinase-like" evidence="1">
    <location>
        <begin position="5"/>
        <end position="184"/>
    </location>
</feature>
<feature type="binding site" evidence="1">
    <location>
        <begin position="12"/>
        <end position="19"/>
    </location>
    <ligand>
        <name>ATP</name>
        <dbReference type="ChEBI" id="CHEBI:30616"/>
    </ligand>
</feature>
<sequence length="210" mass="24220">MSERGLLIVFSGPSGVGKGTVRQEIFSTPDHQFEYSVSMTTRPQRLGEIDGVDYFFRTREEFEELIKQGQMLEYAEYVGNYYGTPLTYVNETLDKGIDVFLEIEVQGALQVKQKVPDGVFIFLTPPDLAELKDRLVGRGTDSQEVIAQRIERAKEEIALMREYDYAVVNDEVKLAAERVKHIIETEHFRVERVIGRYHKMINEELPLPLR</sequence>
<dbReference type="EC" id="2.7.4.8" evidence="1"/>
<dbReference type="EMBL" id="AE014133">
    <property type="protein sequence ID" value="AAN58224.1"/>
    <property type="molecule type" value="Genomic_DNA"/>
</dbReference>
<dbReference type="RefSeq" id="NP_720918.1">
    <property type="nucleotide sequence ID" value="NC_004350.2"/>
</dbReference>
<dbReference type="RefSeq" id="WP_002263045.1">
    <property type="nucleotide sequence ID" value="NC_004350.2"/>
</dbReference>
<dbReference type="SMR" id="Q8DVK6"/>
<dbReference type="STRING" id="210007.SMU_478"/>
<dbReference type="GeneID" id="93859954"/>
<dbReference type="KEGG" id="smu:SMU_478"/>
<dbReference type="PATRIC" id="fig|210007.7.peg.418"/>
<dbReference type="eggNOG" id="COG0194">
    <property type="taxonomic scope" value="Bacteria"/>
</dbReference>
<dbReference type="HOGENOM" id="CLU_001715_1_2_9"/>
<dbReference type="OrthoDB" id="9808150at2"/>
<dbReference type="PhylomeDB" id="Q8DVK6"/>
<dbReference type="Proteomes" id="UP000002512">
    <property type="component" value="Chromosome"/>
</dbReference>
<dbReference type="GO" id="GO:0005829">
    <property type="term" value="C:cytosol"/>
    <property type="evidence" value="ECO:0007669"/>
    <property type="project" value="TreeGrafter"/>
</dbReference>
<dbReference type="GO" id="GO:0005524">
    <property type="term" value="F:ATP binding"/>
    <property type="evidence" value="ECO:0007669"/>
    <property type="project" value="UniProtKB-UniRule"/>
</dbReference>
<dbReference type="GO" id="GO:0004385">
    <property type="term" value="F:guanylate kinase activity"/>
    <property type="evidence" value="ECO:0007669"/>
    <property type="project" value="UniProtKB-UniRule"/>
</dbReference>
<dbReference type="CDD" id="cd00071">
    <property type="entry name" value="GMPK"/>
    <property type="match status" value="1"/>
</dbReference>
<dbReference type="FunFam" id="3.40.50.300:FF:000855">
    <property type="entry name" value="Guanylate kinase"/>
    <property type="match status" value="1"/>
</dbReference>
<dbReference type="FunFam" id="3.30.63.10:FF:000002">
    <property type="entry name" value="Guanylate kinase 1"/>
    <property type="match status" value="1"/>
</dbReference>
<dbReference type="Gene3D" id="3.30.63.10">
    <property type="entry name" value="Guanylate Kinase phosphate binding domain"/>
    <property type="match status" value="1"/>
</dbReference>
<dbReference type="Gene3D" id="3.40.50.300">
    <property type="entry name" value="P-loop containing nucleotide triphosphate hydrolases"/>
    <property type="match status" value="2"/>
</dbReference>
<dbReference type="HAMAP" id="MF_00328">
    <property type="entry name" value="Guanylate_kinase"/>
    <property type="match status" value="1"/>
</dbReference>
<dbReference type="InterPro" id="IPR008145">
    <property type="entry name" value="GK/Ca_channel_bsu"/>
</dbReference>
<dbReference type="InterPro" id="IPR008144">
    <property type="entry name" value="Guanylate_kin-like_dom"/>
</dbReference>
<dbReference type="InterPro" id="IPR017665">
    <property type="entry name" value="Guanylate_kinase"/>
</dbReference>
<dbReference type="InterPro" id="IPR020590">
    <property type="entry name" value="Guanylate_kinase_CS"/>
</dbReference>
<dbReference type="InterPro" id="IPR027417">
    <property type="entry name" value="P-loop_NTPase"/>
</dbReference>
<dbReference type="NCBIfam" id="TIGR03263">
    <property type="entry name" value="guanyl_kin"/>
    <property type="match status" value="1"/>
</dbReference>
<dbReference type="PANTHER" id="PTHR23117:SF13">
    <property type="entry name" value="GUANYLATE KINASE"/>
    <property type="match status" value="1"/>
</dbReference>
<dbReference type="PANTHER" id="PTHR23117">
    <property type="entry name" value="GUANYLATE KINASE-RELATED"/>
    <property type="match status" value="1"/>
</dbReference>
<dbReference type="Pfam" id="PF00625">
    <property type="entry name" value="Guanylate_kin"/>
    <property type="match status" value="1"/>
</dbReference>
<dbReference type="SMART" id="SM00072">
    <property type="entry name" value="GuKc"/>
    <property type="match status" value="1"/>
</dbReference>
<dbReference type="SUPFAM" id="SSF52540">
    <property type="entry name" value="P-loop containing nucleoside triphosphate hydrolases"/>
    <property type="match status" value="1"/>
</dbReference>
<dbReference type="PROSITE" id="PS00856">
    <property type="entry name" value="GUANYLATE_KINASE_1"/>
    <property type="match status" value="1"/>
</dbReference>
<dbReference type="PROSITE" id="PS50052">
    <property type="entry name" value="GUANYLATE_KINASE_2"/>
    <property type="match status" value="1"/>
</dbReference>
<name>KGUA_STRMU</name>
<accession>Q8DVK6</accession>
<proteinExistence type="inferred from homology"/>